<protein>
    <recommendedName>
        <fullName>Bicarbonate transport ATP-binding protein CmpC</fullName>
        <ecNumber>7.6.2.-</ecNumber>
    </recommendedName>
</protein>
<reference key="1">
    <citation type="journal article" date="1996" name="DNA Res.">
        <title>Sequence analysis of the genome of the unicellular cyanobacterium Synechocystis sp. strain PCC6803. II. Sequence determination of the entire genome and assignment of potential protein-coding regions.</title>
        <authorList>
            <person name="Kaneko T."/>
            <person name="Sato S."/>
            <person name="Kotani H."/>
            <person name="Tanaka A."/>
            <person name="Asamizu E."/>
            <person name="Nakamura Y."/>
            <person name="Miyajima N."/>
            <person name="Hirosawa M."/>
            <person name="Sugiura M."/>
            <person name="Sasamoto S."/>
            <person name="Kimura T."/>
            <person name="Hosouchi T."/>
            <person name="Matsuno A."/>
            <person name="Muraki A."/>
            <person name="Nakazaki N."/>
            <person name="Naruo K."/>
            <person name="Okumura S."/>
            <person name="Shimpo S."/>
            <person name="Takeuchi C."/>
            <person name="Wada T."/>
            <person name="Watanabe A."/>
            <person name="Yamada M."/>
            <person name="Yasuda M."/>
            <person name="Tabata S."/>
        </authorList>
    </citation>
    <scope>NUCLEOTIDE SEQUENCE [LARGE SCALE GENOMIC DNA]</scope>
    <source>
        <strain>ATCC 27184 / PCC 6803 / Kazusa</strain>
    </source>
</reference>
<reference key="2">
    <citation type="journal article" date="2001" name="J. Bacteriol.">
        <title>Involvement of a CbbR homolog in low CO2-induced activation of the bicarbonate transporter operon in cyanobacteria.</title>
        <authorList>
            <person name="Omata T."/>
            <person name="Gohta S."/>
            <person name="Takahashi Y."/>
            <person name="Harano Y."/>
            <person name="Maeda S."/>
        </authorList>
    </citation>
    <scope>REGULATION BY CMPR</scope>
</reference>
<organism>
    <name type="scientific">Synechocystis sp. (strain ATCC 27184 / PCC 6803 / Kazusa)</name>
    <dbReference type="NCBI Taxonomy" id="1111708"/>
    <lineage>
        <taxon>Bacteria</taxon>
        <taxon>Bacillati</taxon>
        <taxon>Cyanobacteriota</taxon>
        <taxon>Cyanophyceae</taxon>
        <taxon>Synechococcales</taxon>
        <taxon>Merismopediaceae</taxon>
        <taxon>Synechocystis</taxon>
    </lineage>
</organism>
<gene>
    <name type="primary">cmpC</name>
    <name type="ordered locus">slr0043</name>
</gene>
<feature type="chain" id="PRO_0000341956" description="Bicarbonate transport ATP-binding protein CmpC">
    <location>
        <begin position="1"/>
        <end position="667"/>
    </location>
</feature>
<feature type="domain" description="ABC transporter" evidence="2">
    <location>
        <begin position="5"/>
        <end position="239"/>
    </location>
</feature>
<feature type="region of interest" description="CmpA-like">
    <location>
        <begin position="281"/>
        <end position="667"/>
    </location>
</feature>
<feature type="binding site" evidence="2">
    <location>
        <begin position="42"/>
        <end position="49"/>
    </location>
    <ligand>
        <name>ATP</name>
        <dbReference type="ChEBI" id="CHEBI:30616"/>
    </ligand>
</feature>
<name>CMPC_SYNY3</name>
<keyword id="KW-0067">ATP-binding</keyword>
<keyword id="KW-0997">Cell inner membrane</keyword>
<keyword id="KW-1003">Cell membrane</keyword>
<keyword id="KW-0406">Ion transport</keyword>
<keyword id="KW-0472">Membrane</keyword>
<keyword id="KW-0547">Nucleotide-binding</keyword>
<keyword id="KW-1185">Reference proteome</keyword>
<keyword id="KW-1278">Translocase</keyword>
<keyword id="KW-0813">Transport</keyword>
<dbReference type="EC" id="7.6.2.-"/>
<dbReference type="EMBL" id="BA000022">
    <property type="protein sequence ID" value="BAA10806.1"/>
    <property type="molecule type" value="Genomic_DNA"/>
</dbReference>
<dbReference type="PIR" id="S75959">
    <property type="entry name" value="S75959"/>
</dbReference>
<dbReference type="SMR" id="Q55462"/>
<dbReference type="STRING" id="1148.gene:10500310"/>
<dbReference type="PaxDb" id="1148-1001319"/>
<dbReference type="EnsemblBacteria" id="BAA10806">
    <property type="protein sequence ID" value="BAA10806"/>
    <property type="gene ID" value="BAA10806"/>
</dbReference>
<dbReference type="KEGG" id="syn:slr0043"/>
<dbReference type="eggNOG" id="COG0715">
    <property type="taxonomic scope" value="Bacteria"/>
</dbReference>
<dbReference type="eggNOG" id="COG1116">
    <property type="taxonomic scope" value="Bacteria"/>
</dbReference>
<dbReference type="InParanoid" id="Q55462"/>
<dbReference type="PhylomeDB" id="Q55462"/>
<dbReference type="Proteomes" id="UP000001425">
    <property type="component" value="Chromosome"/>
</dbReference>
<dbReference type="GO" id="GO:0005886">
    <property type="term" value="C:plasma membrane"/>
    <property type="evidence" value="ECO:0007669"/>
    <property type="project" value="UniProtKB-SubCell"/>
</dbReference>
<dbReference type="GO" id="GO:0005524">
    <property type="term" value="F:ATP binding"/>
    <property type="evidence" value="ECO:0007669"/>
    <property type="project" value="UniProtKB-KW"/>
</dbReference>
<dbReference type="GO" id="GO:0016887">
    <property type="term" value="F:ATP hydrolysis activity"/>
    <property type="evidence" value="ECO:0007669"/>
    <property type="project" value="InterPro"/>
</dbReference>
<dbReference type="GO" id="GO:0015112">
    <property type="term" value="F:nitrate transmembrane transporter activity"/>
    <property type="evidence" value="ECO:0007669"/>
    <property type="project" value="InterPro"/>
</dbReference>
<dbReference type="GO" id="GO:0006811">
    <property type="term" value="P:monoatomic ion transport"/>
    <property type="evidence" value="ECO:0007669"/>
    <property type="project" value="UniProtKB-KW"/>
</dbReference>
<dbReference type="CDD" id="cd03293">
    <property type="entry name" value="ABC_NrtD_SsuB_transporters"/>
    <property type="match status" value="1"/>
</dbReference>
<dbReference type="CDD" id="cd13553">
    <property type="entry name" value="PBP2_NrtA_CpmA_like"/>
    <property type="match status" value="1"/>
</dbReference>
<dbReference type="Gene3D" id="3.40.50.300">
    <property type="entry name" value="P-loop containing nucleotide triphosphate hydrolases"/>
    <property type="match status" value="1"/>
</dbReference>
<dbReference type="Gene3D" id="3.40.190.10">
    <property type="entry name" value="Periplasmic binding protein-like II"/>
    <property type="match status" value="2"/>
</dbReference>
<dbReference type="InterPro" id="IPR003593">
    <property type="entry name" value="AAA+_ATPase"/>
</dbReference>
<dbReference type="InterPro" id="IPR050093">
    <property type="entry name" value="ABC_SmlMolc_Importer"/>
</dbReference>
<dbReference type="InterPro" id="IPR003439">
    <property type="entry name" value="ABC_transporter-like_ATP-bd"/>
</dbReference>
<dbReference type="InterPro" id="IPR017871">
    <property type="entry name" value="ABC_transporter-like_CS"/>
</dbReference>
<dbReference type="InterPro" id="IPR005890">
    <property type="entry name" value="NO3_transporter_ATP-bd-like"/>
</dbReference>
<dbReference type="InterPro" id="IPR044527">
    <property type="entry name" value="NrtA/CpmA_ABC-bd_dom"/>
</dbReference>
<dbReference type="InterPro" id="IPR027417">
    <property type="entry name" value="P-loop_NTPase"/>
</dbReference>
<dbReference type="NCBIfam" id="TIGR01184">
    <property type="entry name" value="ntrCD"/>
    <property type="match status" value="1"/>
</dbReference>
<dbReference type="PANTHER" id="PTHR42781:SF8">
    <property type="entry name" value="BICARBONATE TRANSPORT ATP-BINDING PROTEIN CMPC"/>
    <property type="match status" value="1"/>
</dbReference>
<dbReference type="PANTHER" id="PTHR42781">
    <property type="entry name" value="SPERMIDINE/PUTRESCINE IMPORT ATP-BINDING PROTEIN POTA"/>
    <property type="match status" value="1"/>
</dbReference>
<dbReference type="Pfam" id="PF00005">
    <property type="entry name" value="ABC_tran"/>
    <property type="match status" value="1"/>
</dbReference>
<dbReference type="Pfam" id="PF13379">
    <property type="entry name" value="NMT1_2"/>
    <property type="match status" value="1"/>
</dbReference>
<dbReference type="SMART" id="SM00382">
    <property type="entry name" value="AAA"/>
    <property type="match status" value="1"/>
</dbReference>
<dbReference type="SUPFAM" id="SSF52540">
    <property type="entry name" value="P-loop containing nucleoside triphosphate hydrolases"/>
    <property type="match status" value="1"/>
</dbReference>
<dbReference type="SUPFAM" id="SSF53850">
    <property type="entry name" value="Periplasmic binding protein-like II"/>
    <property type="match status" value="1"/>
</dbReference>
<dbReference type="PROSITE" id="PS00211">
    <property type="entry name" value="ABC_TRANSPORTER_1"/>
    <property type="match status" value="1"/>
</dbReference>
<dbReference type="PROSITE" id="PS50893">
    <property type="entry name" value="ABC_TRANSPORTER_2"/>
    <property type="match status" value="1"/>
</dbReference>
<comment type="function">
    <text evidence="1">Part of the ABC transporter complex CmpABCD involved in bicarbonate transport. Responsible for energy coupling to the transport system (By similarity).</text>
</comment>
<comment type="subunit">
    <text evidence="1">The complex is composed of two ATP-binding proteins (CmpC and CmpD), a transmembrane protein (CmpB) and a solute-binding protein (CmpA).</text>
</comment>
<comment type="subcellular location">
    <subcellularLocation>
        <location evidence="3">Cell inner membrane</location>
        <topology evidence="3">Peripheral membrane protein</topology>
    </subcellularLocation>
</comment>
<comment type="induction">
    <text>By carbon dioxide-limited conditions, probably via CmpR.</text>
</comment>
<comment type="similarity">
    <text evidence="3">Belongs to the ABC transporter superfamily. Nitrate/nitrite/cyanate uptake transporter (NitT) (TC 3.A.1.16) family.</text>
</comment>
<sequence length="667" mass="74097">MSLFVAVDNIDKVFSLTDGGEYIALKGINLEIKKGEFVSLIGHSGCGKSTLLNMIAGLDLPSEGIVTLEGQRIKQPGPDKMVIFQNYSLLPWLTVKQNIALAVDEVMKGASAAERKAIVEEHINLVGLGHAVDKRPGELSGGMKQRVAIARALAIRPKLLLLDEPFGALDALTRGNLQEQLMRICEQYQVTAVMVTHDVDEAVLLSDRIVMLTNGPGSNIGGILEVDIPRPRKRMEVVEHPSYYSLRSEIIYFLNQQKRIKKLRAKKTTAIARHGLEKVNLELGYVPLVACAPLVVAQEKGFFAKHGLDEVSLVRETSWRGIVDGIAGGYLDGAQMPAGMPTWLTAGGYREQSIPVVSALTMTRNGNAITLSKKLYDQGIYTAEDFRQLLLASDGDRHTLGMVHPSSMHNLLLRYWLAAHNINPDRDVHLKTIPPAQMVADLKAGTIDGYCVSEPWNLRASMEGAGFSIATDLEIWQNHPGKVLGVREDWAIAHPNTHVALVKALLEACAYCADPNHEMEIRELLATRQYLSTNIDYIHLGDPEGRTCRLGNPVEYSHHLFFGDQFNRPSRTEHLWMMTQMARWGDIPFPRNWVEILERVCRVGVFSTAARELGYDVNYQRQPIALFDGKVFNADDPIAYLNQTVIHRNFTIAEVHLDNPTPAPVFA</sequence>
<evidence type="ECO:0000250" key="1"/>
<evidence type="ECO:0000255" key="2">
    <source>
        <dbReference type="PROSITE-ProRule" id="PRU00434"/>
    </source>
</evidence>
<evidence type="ECO:0000305" key="3"/>
<accession>Q55462</accession>
<proteinExistence type="evidence at transcript level"/>